<comment type="function">
    <text evidence="3">Mediates formation of germacrene C and germacrene D using farnesyl diphosphate as substrate. Can also catalyze formation of trace of germacrene B.</text>
</comment>
<comment type="catalytic activity">
    <reaction evidence="3">
        <text>(2E,6E)-farnesyl diphosphate = germacrene C + diphosphate</text>
        <dbReference type="Rhea" id="RHEA:28302"/>
        <dbReference type="ChEBI" id="CHEBI:33019"/>
        <dbReference type="ChEBI" id="CHEBI:61478"/>
        <dbReference type="ChEBI" id="CHEBI:175763"/>
        <dbReference type="EC" id="4.2.3.60"/>
    </reaction>
</comment>
<comment type="catalytic activity">
    <reaction evidence="3">
        <text>(2E,6E)-farnesyl diphosphate = (-)-germacrene D + diphosphate</text>
        <dbReference type="Rhea" id="RHEA:12016"/>
        <dbReference type="ChEBI" id="CHEBI:33019"/>
        <dbReference type="ChEBI" id="CHEBI:49044"/>
        <dbReference type="ChEBI" id="CHEBI:175763"/>
        <dbReference type="EC" id="4.2.3.75"/>
    </reaction>
</comment>
<comment type="cofactor">
    <cofactor evidence="1">
        <name>Mg(2+)</name>
        <dbReference type="ChEBI" id="CHEBI:18420"/>
    </cofactor>
    <text evidence="1">Binds 3 Mg(2+) ions per subunit.</text>
</comment>
<comment type="biophysicochemical properties">
    <kinetics>
        <KM evidence="3">13.7 uM for farnesyl diphosphate</KM>
        <text>kcat is 0.01 sec(-1) with farnesyl diphosphate as substrate.</text>
    </kinetics>
</comment>
<comment type="tissue specificity">
    <text evidence="3">Predominantly expressed in root.</text>
</comment>
<comment type="similarity">
    <text evidence="4">Belongs to the terpene synthase family.</text>
</comment>
<keyword id="KW-0456">Lyase</keyword>
<keyword id="KW-0460">Magnesium</keyword>
<keyword id="KW-0479">Metal-binding</keyword>
<gene>
    <name type="primary">TPS1</name>
</gene>
<sequence length="563" mass="65455">MESCLSVSSAPPPKKNIQEPVRPNANFHKSVWGDHFLKYASNPEQINDGVDKQHKQLKEELRKKLVVNVNIERAEEQLKLIDAIQRLGVAYHFRTEIASVLNNQLELWNNKVDDDDLYLTSLRFRLLRQQGYNVSCAVFEKFKNIDGRFNECLTDDVRGLLSLYESTHMRVHKEDILEEALEFTVAQLEQVIKSSLSDKVLLSQVVHALNIPIRKSLTRLEARYFISVYEQDKSCNETLLKFSKLDFNILQKLHQQEVADLTLWWKNLNVSEKVPYARDRLVECYFWALAEYFEPQYSRARKMSGKITALISLIDDTYDSYGTFEELALFTDAAQRWDINAIDQLPEYMRPIFRELIYLYNAMEEELLNDGISYRVEYAKQSVIQMITAYNDEAIWYHNNYVPTFEEYLKVALVSSGYRMLPTNSFVGMGKTEVPHQAFDWVSNNPLMVKASTIIARLDNDKVGHEHEQDRGHVASGVECYMKQHGATKEEAVVEFNKRISSAWKDINQECLHPLPVPMHLLERVLNLVRFVTLFYKNGDMYTNSNTHMKEFISSLLVESIPS</sequence>
<proteinExistence type="evidence at protein level"/>
<evidence type="ECO:0000250" key="1"/>
<evidence type="ECO:0000256" key="2">
    <source>
        <dbReference type="SAM" id="MobiDB-lite"/>
    </source>
</evidence>
<evidence type="ECO:0000269" key="3">
    <source>
    </source>
</evidence>
<evidence type="ECO:0000305" key="4"/>
<feature type="chain" id="PRO_0000421725" description="Germacrene C/D synthase">
    <location>
        <begin position="1"/>
        <end position="563"/>
    </location>
</feature>
<feature type="region of interest" description="Disordered" evidence="2">
    <location>
        <begin position="1"/>
        <end position="22"/>
    </location>
</feature>
<feature type="short sequence motif" description="DDXXD motif">
    <location>
        <begin position="315"/>
        <end position="319"/>
    </location>
</feature>
<feature type="binding site" evidence="1">
    <location>
        <position position="315"/>
    </location>
    <ligand>
        <name>Mg(2+)</name>
        <dbReference type="ChEBI" id="CHEBI:18420"/>
        <label>1</label>
    </ligand>
</feature>
<feature type="binding site" evidence="1">
    <location>
        <position position="315"/>
    </location>
    <ligand>
        <name>Mg(2+)</name>
        <dbReference type="ChEBI" id="CHEBI:18420"/>
        <label>2</label>
    </ligand>
</feature>
<feature type="binding site" evidence="1">
    <location>
        <position position="319"/>
    </location>
    <ligand>
        <name>Mg(2+)</name>
        <dbReference type="ChEBI" id="CHEBI:18420"/>
        <label>1</label>
    </ligand>
</feature>
<feature type="binding site" evidence="1">
    <location>
        <position position="319"/>
    </location>
    <ligand>
        <name>Mg(2+)</name>
        <dbReference type="ChEBI" id="CHEBI:18420"/>
        <label>2</label>
    </ligand>
</feature>
<feature type="binding site" evidence="1">
    <location>
        <position position="468"/>
    </location>
    <ligand>
        <name>Mg(2+)</name>
        <dbReference type="ChEBI" id="CHEBI:18420"/>
        <label>3</label>
    </ligand>
</feature>
<name>TPS1_VALOF</name>
<dbReference type="EC" id="4.2.3.60"/>
<dbReference type="EC" id="4.2.3.75"/>
<dbReference type="EMBL" id="JQ437839">
    <property type="protein sequence ID" value="AFR42417.1"/>
    <property type="molecule type" value="mRNA"/>
</dbReference>
<dbReference type="SMR" id="J9RLZ7"/>
<dbReference type="GO" id="GO:0102904">
    <property type="term" value="F:germacrene C synthase activity"/>
    <property type="evidence" value="ECO:0007669"/>
    <property type="project" value="UniProtKB-EC"/>
</dbReference>
<dbReference type="GO" id="GO:0052577">
    <property type="term" value="F:germacrene-D synthase activity"/>
    <property type="evidence" value="ECO:0007669"/>
    <property type="project" value="UniProtKB-EC"/>
</dbReference>
<dbReference type="GO" id="GO:0000287">
    <property type="term" value="F:magnesium ion binding"/>
    <property type="evidence" value="ECO:0007669"/>
    <property type="project" value="InterPro"/>
</dbReference>
<dbReference type="GO" id="GO:0016102">
    <property type="term" value="P:diterpenoid biosynthetic process"/>
    <property type="evidence" value="ECO:0007669"/>
    <property type="project" value="InterPro"/>
</dbReference>
<dbReference type="CDD" id="cd00684">
    <property type="entry name" value="Terpene_cyclase_plant_C1"/>
    <property type="match status" value="1"/>
</dbReference>
<dbReference type="FunFam" id="1.10.600.10:FF:000007">
    <property type="entry name" value="Isoprene synthase, chloroplastic"/>
    <property type="match status" value="1"/>
</dbReference>
<dbReference type="FunFam" id="1.50.10.130:FF:000001">
    <property type="entry name" value="Isoprene synthase, chloroplastic"/>
    <property type="match status" value="1"/>
</dbReference>
<dbReference type="Gene3D" id="1.10.600.10">
    <property type="entry name" value="Farnesyl Diphosphate Synthase"/>
    <property type="match status" value="1"/>
</dbReference>
<dbReference type="Gene3D" id="1.50.10.130">
    <property type="entry name" value="Terpene synthase, N-terminal domain"/>
    <property type="match status" value="1"/>
</dbReference>
<dbReference type="InterPro" id="IPR008949">
    <property type="entry name" value="Isoprenoid_synthase_dom_sf"/>
</dbReference>
<dbReference type="InterPro" id="IPR034741">
    <property type="entry name" value="Terpene_cyclase-like_1_C"/>
</dbReference>
<dbReference type="InterPro" id="IPR044814">
    <property type="entry name" value="Terpene_cyclase_plant_C1"/>
</dbReference>
<dbReference type="InterPro" id="IPR001906">
    <property type="entry name" value="Terpene_synth_N"/>
</dbReference>
<dbReference type="InterPro" id="IPR036965">
    <property type="entry name" value="Terpene_synth_N_sf"/>
</dbReference>
<dbReference type="InterPro" id="IPR050148">
    <property type="entry name" value="Terpene_synthase-like"/>
</dbReference>
<dbReference type="InterPro" id="IPR005630">
    <property type="entry name" value="Terpene_synthase_metal-bd"/>
</dbReference>
<dbReference type="InterPro" id="IPR008930">
    <property type="entry name" value="Terpenoid_cyclase/PrenylTrfase"/>
</dbReference>
<dbReference type="PANTHER" id="PTHR31225:SF221">
    <property type="entry name" value="(-)-GERMACRENE D SYNTHASE"/>
    <property type="match status" value="1"/>
</dbReference>
<dbReference type="PANTHER" id="PTHR31225">
    <property type="entry name" value="OS04G0344100 PROTEIN-RELATED"/>
    <property type="match status" value="1"/>
</dbReference>
<dbReference type="Pfam" id="PF01397">
    <property type="entry name" value="Terpene_synth"/>
    <property type="match status" value="1"/>
</dbReference>
<dbReference type="Pfam" id="PF03936">
    <property type="entry name" value="Terpene_synth_C"/>
    <property type="match status" value="1"/>
</dbReference>
<dbReference type="SFLD" id="SFLDS00005">
    <property type="entry name" value="Isoprenoid_Synthase_Type_I"/>
    <property type="match status" value="1"/>
</dbReference>
<dbReference type="SFLD" id="SFLDG01019">
    <property type="entry name" value="Terpene_Cyclase_Like_1_C_Termi"/>
    <property type="match status" value="1"/>
</dbReference>
<dbReference type="SUPFAM" id="SSF48239">
    <property type="entry name" value="Terpenoid cyclases/Protein prenyltransferases"/>
    <property type="match status" value="1"/>
</dbReference>
<dbReference type="SUPFAM" id="SSF48576">
    <property type="entry name" value="Terpenoid synthases"/>
    <property type="match status" value="1"/>
</dbReference>
<protein>
    <recommendedName>
        <fullName>Germacrene C/D synthase</fullName>
        <ecNumber>4.2.3.60</ecNumber>
        <ecNumber>4.2.3.75</ecNumber>
    </recommendedName>
    <alternativeName>
        <fullName>Terpene synthase 1</fullName>
        <shortName>VoTPS1</shortName>
    </alternativeName>
</protein>
<accession>J9RLZ7</accession>
<reference key="1">
    <citation type="journal article" date="2012" name="FEBS J.">
        <title>Enzymatic synthesis of valerena-4,7(11)-diene by a unique sesquiterpene synthase from the valerian plant (Valeriana officinalis).</title>
        <authorList>
            <person name="Pyle B.W."/>
            <person name="Tran H.T."/>
            <person name="Pickel B."/>
            <person name="Haslam T.M."/>
            <person name="Gao Z."/>
            <person name="MacNevin G."/>
            <person name="Vederas J.C."/>
            <person name="Kim S.U."/>
            <person name="Ro D.K."/>
        </authorList>
    </citation>
    <scope>NUCLEOTIDE SEQUENCE [MRNA]</scope>
    <scope>FUNCTION</scope>
    <scope>CATALYTIC ACTIVITY</scope>
    <scope>BIOPHYSICOCHEMICAL PROPERTIES</scope>
    <scope>TISSUE SPECIFICITY</scope>
</reference>
<organism>
    <name type="scientific">Valeriana officinalis</name>
    <name type="common">Valerian</name>
    <name type="synonym">Garden heliotrope</name>
    <dbReference type="NCBI Taxonomy" id="19953"/>
    <lineage>
        <taxon>Eukaryota</taxon>
        <taxon>Viridiplantae</taxon>
        <taxon>Streptophyta</taxon>
        <taxon>Embryophyta</taxon>
        <taxon>Tracheophyta</taxon>
        <taxon>Spermatophyta</taxon>
        <taxon>Magnoliopsida</taxon>
        <taxon>eudicotyledons</taxon>
        <taxon>Gunneridae</taxon>
        <taxon>Pentapetalae</taxon>
        <taxon>asterids</taxon>
        <taxon>campanulids</taxon>
        <taxon>Dipsacales</taxon>
        <taxon>Caprifoliaceae</taxon>
        <taxon>Valeriana</taxon>
    </lineage>
</organism>